<organism>
    <name type="scientific">Schizosaccharomyces pombe (strain 972 / ATCC 24843)</name>
    <name type="common">Fission yeast</name>
    <dbReference type="NCBI Taxonomy" id="284812"/>
    <lineage>
        <taxon>Eukaryota</taxon>
        <taxon>Fungi</taxon>
        <taxon>Dikarya</taxon>
        <taxon>Ascomycota</taxon>
        <taxon>Taphrinomycotina</taxon>
        <taxon>Schizosaccharomycetes</taxon>
        <taxon>Schizosaccharomycetales</taxon>
        <taxon>Schizosaccharomycetaceae</taxon>
        <taxon>Schizosaccharomyces</taxon>
    </lineage>
</organism>
<gene>
    <name type="primary">spe1</name>
    <name type="ORF">SPAC144.04c</name>
</gene>
<evidence type="ECO:0000250" key="1">
    <source>
        <dbReference type="UniProtKB" id="P00860"/>
    </source>
</evidence>
<evidence type="ECO:0000250" key="2">
    <source>
        <dbReference type="UniProtKB" id="P07805"/>
    </source>
</evidence>
<evidence type="ECO:0000250" key="3">
    <source>
        <dbReference type="UniProtKB" id="P08432"/>
    </source>
</evidence>
<evidence type="ECO:0000250" key="4">
    <source>
        <dbReference type="UniProtKB" id="P11926"/>
    </source>
</evidence>
<evidence type="ECO:0000305" key="5"/>
<proteinExistence type="evidence at transcript level"/>
<protein>
    <recommendedName>
        <fullName>Ornithine decarboxylase</fullName>
        <shortName>ODC</shortName>
        <ecNumber>4.1.1.17</ecNumber>
    </recommendedName>
</protein>
<comment type="function">
    <text evidence="3">Catalyzes the first and rate-limiting step of polyamine biosynthesis that converts ornithine into putrescine, which is the precursor for the polyamines, spermidine and spermine. Polyamines are essential for cell proliferation and are implicated in cellular processes, ranging from DNA replication to apoptosis.</text>
</comment>
<comment type="catalytic activity">
    <reaction evidence="3">
        <text>L-ornithine + H(+) = putrescine + CO2</text>
        <dbReference type="Rhea" id="RHEA:22964"/>
        <dbReference type="ChEBI" id="CHEBI:15378"/>
        <dbReference type="ChEBI" id="CHEBI:16526"/>
        <dbReference type="ChEBI" id="CHEBI:46911"/>
        <dbReference type="ChEBI" id="CHEBI:326268"/>
        <dbReference type="EC" id="4.1.1.17"/>
    </reaction>
</comment>
<comment type="cofactor">
    <cofactor evidence="3">
        <name>pyridoxal 5'-phosphate</name>
        <dbReference type="ChEBI" id="CHEBI:597326"/>
    </cofactor>
</comment>
<comment type="activity regulation">
    <text evidence="3">Inhibited by antizyme (AZ) OAZ1 in response to polyamine levels. AZ inhibits the assembly of the functional homodimer by binding to ODC monomers and targeting them for ubiquitin-independent proteolytic destruction by the 26S proteasome.</text>
</comment>
<comment type="pathway">
    <text>Amine and polyamine biosynthesis; putrescine biosynthesis via L-ornithine pathway; putrescine from L-ornithine: step 1/1.</text>
</comment>
<comment type="subunit">
    <text evidence="3 4">Homodimer (By similarity). Only the dimer is catalytically active, as the active sites are constructed of residues from both monomers (By similarity).</text>
</comment>
<comment type="subcellular location">
    <subcellularLocation>
        <location evidence="3">Cytoplasm</location>
    </subcellularLocation>
</comment>
<comment type="similarity">
    <text evidence="5">Belongs to the Orn/Lys/Arg decarboxylase class-II family.</text>
</comment>
<dbReference type="EC" id="4.1.1.17"/>
<dbReference type="EMBL" id="AJ243276">
    <property type="protein sequence ID" value="CAB45689.1"/>
    <property type="molecule type" value="mRNA"/>
</dbReference>
<dbReference type="EMBL" id="CU329670">
    <property type="protein sequence ID" value="CAB59684.1"/>
    <property type="molecule type" value="Genomic_DNA"/>
</dbReference>
<dbReference type="EMBL" id="D89177">
    <property type="protein sequence ID" value="BAA13839.1"/>
    <property type="molecule type" value="mRNA"/>
</dbReference>
<dbReference type="PIR" id="T37671">
    <property type="entry name" value="T37671"/>
</dbReference>
<dbReference type="RefSeq" id="NP_594665.1">
    <property type="nucleotide sequence ID" value="NM_001020094.2"/>
</dbReference>
<dbReference type="SMR" id="Q9UQW9"/>
<dbReference type="BioGRID" id="279301">
    <property type="interactions" value="13"/>
</dbReference>
<dbReference type="FunCoup" id="Q9UQW9">
    <property type="interactions" value="373"/>
</dbReference>
<dbReference type="STRING" id="284812.Q9UQW9"/>
<dbReference type="iPTMnet" id="Q9UQW9"/>
<dbReference type="PaxDb" id="4896-SPAC144.04c.1"/>
<dbReference type="EnsemblFungi" id="SPAC144.04c.1">
    <property type="protein sequence ID" value="SPAC144.04c.1:pep"/>
    <property type="gene ID" value="SPAC144.04c"/>
</dbReference>
<dbReference type="GeneID" id="2542855"/>
<dbReference type="KEGG" id="spo:2542855"/>
<dbReference type="PomBase" id="SPAC144.04c">
    <property type="gene designation" value="spe1"/>
</dbReference>
<dbReference type="VEuPathDB" id="FungiDB:SPAC144.04c"/>
<dbReference type="eggNOG" id="KOG0622">
    <property type="taxonomic scope" value="Eukaryota"/>
</dbReference>
<dbReference type="HOGENOM" id="CLU_026444_1_2_1"/>
<dbReference type="InParanoid" id="Q9UQW9"/>
<dbReference type="OMA" id="SFFVCDL"/>
<dbReference type="PhylomeDB" id="Q9UQW9"/>
<dbReference type="Reactome" id="R-SPO-350562">
    <property type="pathway name" value="Regulation of ornithine decarboxylase (ODC)"/>
</dbReference>
<dbReference type="Reactome" id="R-SPO-351143">
    <property type="pathway name" value="Agmatine biosynthesis"/>
</dbReference>
<dbReference type="Reactome" id="R-SPO-351202">
    <property type="pathway name" value="Metabolism of polyamines"/>
</dbReference>
<dbReference type="UniPathway" id="UPA00535">
    <property type="reaction ID" value="UER00288"/>
</dbReference>
<dbReference type="PRO" id="PR:Q9UQW9"/>
<dbReference type="Proteomes" id="UP000002485">
    <property type="component" value="Chromosome I"/>
</dbReference>
<dbReference type="GO" id="GO:0005737">
    <property type="term" value="C:cytoplasm"/>
    <property type="evidence" value="ECO:0000318"/>
    <property type="project" value="GO_Central"/>
</dbReference>
<dbReference type="GO" id="GO:0005829">
    <property type="term" value="C:cytosol"/>
    <property type="evidence" value="ECO:0007005"/>
    <property type="project" value="PomBase"/>
</dbReference>
<dbReference type="GO" id="GO:0005634">
    <property type="term" value="C:nucleus"/>
    <property type="evidence" value="ECO:0007005"/>
    <property type="project" value="PomBase"/>
</dbReference>
<dbReference type="GO" id="GO:0004586">
    <property type="term" value="F:ornithine decarboxylase activity"/>
    <property type="evidence" value="ECO:0000318"/>
    <property type="project" value="GO_Central"/>
</dbReference>
<dbReference type="GO" id="GO:0015940">
    <property type="term" value="P:pantothenate biosynthetic process"/>
    <property type="evidence" value="ECO:0000266"/>
    <property type="project" value="PomBase"/>
</dbReference>
<dbReference type="GO" id="GO:0033387">
    <property type="term" value="P:putrescine biosynthetic process from arginine, via ornithine"/>
    <property type="evidence" value="ECO:0000318"/>
    <property type="project" value="GO_Central"/>
</dbReference>
<dbReference type="CDD" id="cd00622">
    <property type="entry name" value="PLPDE_III_ODC"/>
    <property type="match status" value="1"/>
</dbReference>
<dbReference type="FunFam" id="3.20.20.10:FF:000005">
    <property type="entry name" value="Ornithine decarboxylase"/>
    <property type="match status" value="1"/>
</dbReference>
<dbReference type="Gene3D" id="3.20.20.10">
    <property type="entry name" value="Alanine racemase"/>
    <property type="match status" value="1"/>
</dbReference>
<dbReference type="Gene3D" id="2.40.37.10">
    <property type="entry name" value="Lyase, Ornithine Decarboxylase, Chain A, domain 1"/>
    <property type="match status" value="1"/>
</dbReference>
<dbReference type="InterPro" id="IPR009006">
    <property type="entry name" value="Ala_racemase/Decarboxylase_C"/>
</dbReference>
<dbReference type="InterPro" id="IPR022643">
    <property type="entry name" value="De-COase2_C"/>
</dbReference>
<dbReference type="InterPro" id="IPR022644">
    <property type="entry name" value="De-COase2_N"/>
</dbReference>
<dbReference type="InterPro" id="IPR022653">
    <property type="entry name" value="De-COase2_pyr-phos_BS"/>
</dbReference>
<dbReference type="InterPro" id="IPR000183">
    <property type="entry name" value="Orn/DAP/Arg_de-COase"/>
</dbReference>
<dbReference type="InterPro" id="IPR002433">
    <property type="entry name" value="Orn_de-COase"/>
</dbReference>
<dbReference type="InterPro" id="IPR029066">
    <property type="entry name" value="PLP-binding_barrel"/>
</dbReference>
<dbReference type="PANTHER" id="PTHR11482">
    <property type="entry name" value="ARGININE/DIAMINOPIMELATE/ORNITHINE DECARBOXYLASE"/>
    <property type="match status" value="1"/>
</dbReference>
<dbReference type="PANTHER" id="PTHR11482:SF6">
    <property type="entry name" value="ORNITHINE DECARBOXYLASE 1-RELATED"/>
    <property type="match status" value="1"/>
</dbReference>
<dbReference type="Pfam" id="PF02784">
    <property type="entry name" value="Orn_Arg_deC_N"/>
    <property type="match status" value="1"/>
</dbReference>
<dbReference type="Pfam" id="PF00278">
    <property type="entry name" value="Orn_DAP_Arg_deC"/>
    <property type="match status" value="1"/>
</dbReference>
<dbReference type="PRINTS" id="PR01179">
    <property type="entry name" value="ODADCRBXLASE"/>
</dbReference>
<dbReference type="PRINTS" id="PR01182">
    <property type="entry name" value="ORNDCRBXLASE"/>
</dbReference>
<dbReference type="SUPFAM" id="SSF50621">
    <property type="entry name" value="Alanine racemase C-terminal domain-like"/>
    <property type="match status" value="1"/>
</dbReference>
<dbReference type="SUPFAM" id="SSF51419">
    <property type="entry name" value="PLP-binding barrel"/>
    <property type="match status" value="1"/>
</dbReference>
<dbReference type="PROSITE" id="PS00878">
    <property type="entry name" value="ODR_DC_2_1"/>
    <property type="match status" value="1"/>
</dbReference>
<keyword id="KW-0963">Cytoplasm</keyword>
<keyword id="KW-0210">Decarboxylase</keyword>
<keyword id="KW-0456">Lyase</keyword>
<keyword id="KW-0620">Polyamine biosynthesis</keyword>
<keyword id="KW-0663">Pyridoxal phosphate</keyword>
<keyword id="KW-1185">Reference proteome</keyword>
<reference key="1">
    <citation type="submission" date="1999-06" db="EMBL/GenBank/DDBJ databases">
        <title>Isolation and characterisation of a cDNA for ornithine decarboxylase from Schizosaccharomyces pombe.</title>
        <authorList>
            <person name="Franceschetti M."/>
            <person name="Illingworth C."/>
            <person name="Mayer M.J."/>
            <person name="Michael A.J."/>
        </authorList>
    </citation>
    <scope>NUCLEOTIDE SEQUENCE [MRNA]</scope>
</reference>
<reference key="2">
    <citation type="journal article" date="2002" name="Nature">
        <title>The genome sequence of Schizosaccharomyces pombe.</title>
        <authorList>
            <person name="Wood V."/>
            <person name="Gwilliam R."/>
            <person name="Rajandream M.A."/>
            <person name="Lyne M.H."/>
            <person name="Lyne R."/>
            <person name="Stewart A."/>
            <person name="Sgouros J.G."/>
            <person name="Peat N."/>
            <person name="Hayles J."/>
            <person name="Baker S.G."/>
            <person name="Basham D."/>
            <person name="Bowman S."/>
            <person name="Brooks K."/>
            <person name="Brown D."/>
            <person name="Brown S."/>
            <person name="Chillingworth T."/>
            <person name="Churcher C.M."/>
            <person name="Collins M."/>
            <person name="Connor R."/>
            <person name="Cronin A."/>
            <person name="Davis P."/>
            <person name="Feltwell T."/>
            <person name="Fraser A."/>
            <person name="Gentles S."/>
            <person name="Goble A."/>
            <person name="Hamlin N."/>
            <person name="Harris D.E."/>
            <person name="Hidalgo J."/>
            <person name="Hodgson G."/>
            <person name="Holroyd S."/>
            <person name="Hornsby T."/>
            <person name="Howarth S."/>
            <person name="Huckle E.J."/>
            <person name="Hunt S."/>
            <person name="Jagels K."/>
            <person name="James K.D."/>
            <person name="Jones L."/>
            <person name="Jones M."/>
            <person name="Leather S."/>
            <person name="McDonald S."/>
            <person name="McLean J."/>
            <person name="Mooney P."/>
            <person name="Moule S."/>
            <person name="Mungall K.L."/>
            <person name="Murphy L.D."/>
            <person name="Niblett D."/>
            <person name="Odell C."/>
            <person name="Oliver K."/>
            <person name="O'Neil S."/>
            <person name="Pearson D."/>
            <person name="Quail M.A."/>
            <person name="Rabbinowitsch E."/>
            <person name="Rutherford K.M."/>
            <person name="Rutter S."/>
            <person name="Saunders D."/>
            <person name="Seeger K."/>
            <person name="Sharp S."/>
            <person name="Skelton J."/>
            <person name="Simmonds M.N."/>
            <person name="Squares R."/>
            <person name="Squares S."/>
            <person name="Stevens K."/>
            <person name="Taylor K."/>
            <person name="Taylor R.G."/>
            <person name="Tivey A."/>
            <person name="Walsh S.V."/>
            <person name="Warren T."/>
            <person name="Whitehead S."/>
            <person name="Woodward J.R."/>
            <person name="Volckaert G."/>
            <person name="Aert R."/>
            <person name="Robben J."/>
            <person name="Grymonprez B."/>
            <person name="Weltjens I."/>
            <person name="Vanstreels E."/>
            <person name="Rieger M."/>
            <person name="Schaefer M."/>
            <person name="Mueller-Auer S."/>
            <person name="Gabel C."/>
            <person name="Fuchs M."/>
            <person name="Duesterhoeft A."/>
            <person name="Fritzc C."/>
            <person name="Holzer E."/>
            <person name="Moestl D."/>
            <person name="Hilbert H."/>
            <person name="Borzym K."/>
            <person name="Langer I."/>
            <person name="Beck A."/>
            <person name="Lehrach H."/>
            <person name="Reinhardt R."/>
            <person name="Pohl T.M."/>
            <person name="Eger P."/>
            <person name="Zimmermann W."/>
            <person name="Wedler H."/>
            <person name="Wambutt R."/>
            <person name="Purnelle B."/>
            <person name="Goffeau A."/>
            <person name="Cadieu E."/>
            <person name="Dreano S."/>
            <person name="Gloux S."/>
            <person name="Lelaure V."/>
            <person name="Mottier S."/>
            <person name="Galibert F."/>
            <person name="Aves S.J."/>
            <person name="Xiang Z."/>
            <person name="Hunt C."/>
            <person name="Moore K."/>
            <person name="Hurst S.M."/>
            <person name="Lucas M."/>
            <person name="Rochet M."/>
            <person name="Gaillardin C."/>
            <person name="Tallada V.A."/>
            <person name="Garzon A."/>
            <person name="Thode G."/>
            <person name="Daga R.R."/>
            <person name="Cruzado L."/>
            <person name="Jimenez J."/>
            <person name="Sanchez M."/>
            <person name="del Rey F."/>
            <person name="Benito J."/>
            <person name="Dominguez A."/>
            <person name="Revuelta J.L."/>
            <person name="Moreno S."/>
            <person name="Armstrong J."/>
            <person name="Forsburg S.L."/>
            <person name="Cerutti L."/>
            <person name="Lowe T."/>
            <person name="McCombie W.R."/>
            <person name="Paulsen I."/>
            <person name="Potashkin J."/>
            <person name="Shpakovski G.V."/>
            <person name="Ussery D."/>
            <person name="Barrell B.G."/>
            <person name="Nurse P."/>
        </authorList>
    </citation>
    <scope>NUCLEOTIDE SEQUENCE [LARGE SCALE GENOMIC DNA]</scope>
    <source>
        <strain>972 / ATCC 24843</strain>
    </source>
</reference>
<reference key="3">
    <citation type="journal article" date="1997" name="DNA Res.">
        <title>Identification of open reading frames in Schizosaccharomyces pombe cDNAs.</title>
        <authorList>
            <person name="Yoshioka S."/>
            <person name="Kato K."/>
            <person name="Nakai K."/>
            <person name="Okayama H."/>
            <person name="Nojima H."/>
        </authorList>
    </citation>
    <scope>NUCLEOTIDE SEQUENCE [LARGE SCALE MRNA] OF 70-432</scope>
    <source>
        <strain>PR745</strain>
    </source>
</reference>
<feature type="chain" id="PRO_0000149908" description="Ornithine decarboxylase">
    <location>
        <begin position="1"/>
        <end position="432"/>
    </location>
</feature>
<feature type="active site" description="Proton donor; shared with dimeric partner" evidence="4">
    <location>
        <position position="377"/>
    </location>
</feature>
<feature type="binding site" evidence="4">
    <location>
        <position position="229"/>
    </location>
    <ligand>
        <name>pyridoxal 5'-phosphate</name>
        <dbReference type="ChEBI" id="CHEBI:597326"/>
    </ligand>
</feature>
<feature type="binding site" evidence="4">
    <location>
        <position position="266"/>
    </location>
    <ligand>
        <name>pyridoxal 5'-phosphate</name>
        <dbReference type="ChEBI" id="CHEBI:597326"/>
    </ligand>
</feature>
<feature type="binding site" evidence="4">
    <location>
        <begin position="296"/>
        <end position="299"/>
    </location>
    <ligand>
        <name>pyridoxal 5'-phosphate</name>
        <dbReference type="ChEBI" id="CHEBI:597326"/>
    </ligand>
</feature>
<feature type="binding site" description="in other chain" evidence="2">
    <location>
        <begin position="341"/>
        <end position="342"/>
    </location>
    <ligand>
        <name>substrate</name>
        <note>ligand shared between dimeric partners</note>
    </ligand>
</feature>
<feature type="binding site" evidence="2">
    <location>
        <position position="378"/>
    </location>
    <ligand>
        <name>substrate</name>
        <note>ligand shared between dimeric partners</note>
    </ligand>
</feature>
<feature type="binding site" evidence="4">
    <location>
        <position position="407"/>
    </location>
    <ligand>
        <name>pyridoxal 5'-phosphate</name>
        <dbReference type="ChEBI" id="CHEBI:597326"/>
    </ligand>
</feature>
<feature type="site" description="Stacks against the aromatic ring of pyridoxal phosphate and stabilizes reaction intermediates" evidence="1">
    <location>
        <position position="226"/>
    </location>
</feature>
<feature type="modified residue" description="N6-(pyridoxal phosphate)lysine" evidence="4">
    <location>
        <position position="98"/>
    </location>
</feature>
<feature type="sequence conflict" description="In Ref. 3; BAA13839." evidence="5" ref="3">
    <original>F</original>
    <variation>L</variation>
    <location>
        <position position="116"/>
    </location>
</feature>
<feature type="sequence conflict" description="In Ref. 3; BAA13839." evidence="5" ref="3">
    <original>L</original>
    <variation>P</variation>
    <location>
        <position position="393"/>
    </location>
</feature>
<name>DCOR_SCHPO</name>
<sequence>MPAIMEKNMLVSESLRTTELLGHVKPIDSVVTWSSPGSSRQAIGEAFKNTIEEIERAAVRGEPADSDAFFVADLNGVYRQLLRWHAKLPRVQPFYAVKCNPDPKVLALLNKFGTGFDCASKGELEQILGLGVSPDRIVYANPCKAITYVRYAASKGINLMTFDNADELYKVKQHHPNSRLLLRISTDDSNSLCRLSLKFGASLDDTGKLLDIAKSLELNVVGVSFHVGSGSYDPSAFLDAIQRSRQVFDQGLERGFNFDLLDIGGGFMNDSFDGVADLIRSALDTYFDPSIRVISEPGRFFVSSSFTLAVNVIAKRKLDDEEKVMYYVNDGVYGSLNCILFDHQHPVARVLKCGSRFVYNDLVGTGQHRCFIWGPTCDSLDVIANDAHLPYELNVGDWIYFEDAGAYTVAAASCFNGFKTSRIVYLDTDILD</sequence>
<accession>Q9UQW9</accession>
<accession>P78829</accession>